<gene>
    <name type="primary">ssaA1</name>
    <name type="ordered locus">SAV2566</name>
</gene>
<dbReference type="EMBL" id="BA000017">
    <property type="protein sequence ID" value="BAB58728.1"/>
    <property type="molecule type" value="Genomic_DNA"/>
</dbReference>
<dbReference type="RefSeq" id="WP_000725225.1">
    <property type="nucleotide sequence ID" value="NC_002758.2"/>
</dbReference>
<dbReference type="SMR" id="Q7A2K8"/>
<dbReference type="KEGG" id="sav:SAV2566"/>
<dbReference type="HOGENOM" id="CLU_016043_11_0_9"/>
<dbReference type="Proteomes" id="UP000002481">
    <property type="component" value="Chromosome"/>
</dbReference>
<dbReference type="GO" id="GO:0005576">
    <property type="term" value="C:extracellular region"/>
    <property type="evidence" value="ECO:0007669"/>
    <property type="project" value="UniProtKB-SubCell"/>
</dbReference>
<dbReference type="Gene3D" id="3.90.1720.10">
    <property type="entry name" value="endopeptidase domain like (from Nostoc punctiforme)"/>
    <property type="match status" value="1"/>
</dbReference>
<dbReference type="InterPro" id="IPR007921">
    <property type="entry name" value="CHAP_dom"/>
</dbReference>
<dbReference type="InterPro" id="IPR038765">
    <property type="entry name" value="Papain-like_cys_pep_sf"/>
</dbReference>
<dbReference type="Pfam" id="PF05257">
    <property type="entry name" value="CHAP"/>
    <property type="match status" value="1"/>
</dbReference>
<dbReference type="SUPFAM" id="SSF54001">
    <property type="entry name" value="Cysteine proteinases"/>
    <property type="match status" value="1"/>
</dbReference>
<dbReference type="PROSITE" id="PS50911">
    <property type="entry name" value="CHAP"/>
    <property type="match status" value="1"/>
</dbReference>
<reference key="1">
    <citation type="journal article" date="2001" name="Lancet">
        <title>Whole genome sequencing of meticillin-resistant Staphylococcus aureus.</title>
        <authorList>
            <person name="Kuroda M."/>
            <person name="Ohta T."/>
            <person name="Uchiyama I."/>
            <person name="Baba T."/>
            <person name="Yuzawa H."/>
            <person name="Kobayashi I."/>
            <person name="Cui L."/>
            <person name="Oguchi A."/>
            <person name="Aoki K."/>
            <person name="Nagai Y."/>
            <person name="Lian J.-Q."/>
            <person name="Ito T."/>
            <person name="Kanamori M."/>
            <person name="Matsumaru H."/>
            <person name="Maruyama A."/>
            <person name="Murakami H."/>
            <person name="Hosoyama A."/>
            <person name="Mizutani-Ui Y."/>
            <person name="Takahashi N.K."/>
            <person name="Sawano T."/>
            <person name="Inoue R."/>
            <person name="Kaito C."/>
            <person name="Sekimizu K."/>
            <person name="Hirakawa H."/>
            <person name="Kuhara S."/>
            <person name="Goto S."/>
            <person name="Yabuzaki J."/>
            <person name="Kanehisa M."/>
            <person name="Yamashita A."/>
            <person name="Oshima K."/>
            <person name="Furuya K."/>
            <person name="Yoshino C."/>
            <person name="Shiba T."/>
            <person name="Hattori M."/>
            <person name="Ogasawara N."/>
            <person name="Hayashi H."/>
            <person name="Hiramatsu K."/>
        </authorList>
    </citation>
    <scope>NUCLEOTIDE SEQUENCE [LARGE SCALE GENOMIC DNA]</scope>
    <source>
        <strain>Mu50 / ATCC 700699</strain>
    </source>
</reference>
<protein>
    <recommendedName>
        <fullName>Staphylococcal secretory antigen ssaA1</fullName>
    </recommendedName>
</protein>
<evidence type="ECO:0000250" key="1"/>
<evidence type="ECO:0000255" key="2"/>
<evidence type="ECO:0000255" key="3">
    <source>
        <dbReference type="PROSITE-ProRule" id="PRU00048"/>
    </source>
</evidence>
<sequence length="255" mass="27589">MKKIVTATIATAGLATIAFAGHDAQAAEQNNNGYNSNDAQSYSYTYTIDAQGNYHYTWTGNWNPSQLTQNNTYYYNNYNTYSYNNASYNNYYNHSYQYNNYTNNSQTATNNYYTGGSGASYSTTSNNVHVTTTAAPSSNGRSISNGYASGSNLYTSGQCTYYVFDRVGGKIGSTWGNASNWANAAASSGYTVNNTPKVGAIMQTTQGYYGHVAYVEGVNSNGSVRVSEMNYGHGAGVVTSRTISANQAGSYNFIH</sequence>
<comment type="function">
    <text evidence="1">Not known; immunogenic protein.</text>
</comment>
<comment type="subcellular location">
    <subcellularLocation>
        <location evidence="1">Secreted</location>
    </subcellularLocation>
</comment>
<feature type="signal peptide" evidence="2">
    <location>
        <begin position="1"/>
        <end position="26"/>
    </location>
</feature>
<feature type="chain" id="PRO_0000045309" description="Staphylococcal secretory antigen ssaA1">
    <location>
        <begin position="27"/>
        <end position="255"/>
    </location>
</feature>
<feature type="repeat" description="1">
    <location>
        <begin position="75"/>
        <end position="78"/>
    </location>
</feature>
<feature type="repeat" description="2">
    <location>
        <begin position="88"/>
        <end position="91"/>
    </location>
</feature>
<feature type="repeat" description="3">
    <location>
        <begin position="98"/>
        <end position="101"/>
    </location>
</feature>
<feature type="domain" description="Peptidase C51" evidence="3">
    <location>
        <begin position="134"/>
        <end position="255"/>
    </location>
</feature>
<feature type="region of interest" description="3 X 4 AA repeats of Y-N-N-Y">
    <location>
        <begin position="75"/>
        <end position="101"/>
    </location>
</feature>
<organism>
    <name type="scientific">Staphylococcus aureus (strain Mu50 / ATCC 700699)</name>
    <dbReference type="NCBI Taxonomy" id="158878"/>
    <lineage>
        <taxon>Bacteria</taxon>
        <taxon>Bacillati</taxon>
        <taxon>Bacillota</taxon>
        <taxon>Bacilli</taxon>
        <taxon>Bacillales</taxon>
        <taxon>Staphylococcaceae</taxon>
        <taxon>Staphylococcus</taxon>
    </lineage>
</organism>
<name>SSAA1_STAAM</name>
<accession>Q7A2K8</accession>
<keyword id="KW-0677">Repeat</keyword>
<keyword id="KW-0964">Secreted</keyword>
<keyword id="KW-0732">Signal</keyword>
<keyword id="KW-0843">Virulence</keyword>
<proteinExistence type="inferred from homology"/>